<accession>Q1MHJ5</accession>
<reference key="1">
    <citation type="journal article" date="2006" name="Genome Biol.">
        <title>The genome of Rhizobium leguminosarum has recognizable core and accessory components.</title>
        <authorList>
            <person name="Young J.P.W."/>
            <person name="Crossman L.C."/>
            <person name="Johnston A.W.B."/>
            <person name="Thomson N.R."/>
            <person name="Ghazoui Z.F."/>
            <person name="Hull K.H."/>
            <person name="Wexler M."/>
            <person name="Curson A.R.J."/>
            <person name="Todd J.D."/>
            <person name="Poole P.S."/>
            <person name="Mauchline T.H."/>
            <person name="East A.K."/>
            <person name="Quail M.A."/>
            <person name="Churcher C."/>
            <person name="Arrowsmith C."/>
            <person name="Cherevach I."/>
            <person name="Chillingworth T."/>
            <person name="Clarke K."/>
            <person name="Cronin A."/>
            <person name="Davis P."/>
            <person name="Fraser A."/>
            <person name="Hance Z."/>
            <person name="Hauser H."/>
            <person name="Jagels K."/>
            <person name="Moule S."/>
            <person name="Mungall K."/>
            <person name="Norbertczak H."/>
            <person name="Rabbinowitsch E."/>
            <person name="Sanders M."/>
            <person name="Simmonds M."/>
            <person name="Whitehead S."/>
            <person name="Parkhill J."/>
        </authorList>
    </citation>
    <scope>NUCLEOTIDE SEQUENCE [LARGE SCALE GENOMIC DNA]</scope>
    <source>
        <strain>DSM 114642 / LMG 32736 / 3841</strain>
    </source>
</reference>
<keyword id="KW-0067">ATP-binding</keyword>
<keyword id="KW-0436">Ligase</keyword>
<keyword id="KW-0547">Nucleotide-binding</keyword>
<keyword id="KW-0648">Protein biosynthesis</keyword>
<organism>
    <name type="scientific">Rhizobium johnstonii (strain DSM 114642 / LMG 32736 / 3841)</name>
    <name type="common">Rhizobium leguminosarum bv. viciae</name>
    <dbReference type="NCBI Taxonomy" id="216596"/>
    <lineage>
        <taxon>Bacteria</taxon>
        <taxon>Pseudomonadati</taxon>
        <taxon>Pseudomonadota</taxon>
        <taxon>Alphaproteobacteria</taxon>
        <taxon>Hyphomicrobiales</taxon>
        <taxon>Rhizobiaceae</taxon>
        <taxon>Rhizobium/Agrobacterium group</taxon>
        <taxon>Rhizobium</taxon>
        <taxon>Rhizobium johnstonii</taxon>
    </lineage>
</organism>
<feature type="chain" id="PRO_1000015892" description="Glutamyl-tRNA(Gln) amidotransferase subunit A">
    <location>
        <begin position="1"/>
        <end position="493"/>
    </location>
</feature>
<feature type="active site" description="Charge relay system" evidence="1">
    <location>
        <position position="79"/>
    </location>
</feature>
<feature type="active site" description="Charge relay system" evidence="1">
    <location>
        <position position="159"/>
    </location>
</feature>
<feature type="active site" description="Acyl-ester intermediate" evidence="1">
    <location>
        <position position="183"/>
    </location>
</feature>
<proteinExistence type="inferred from homology"/>
<sequence length="493" mass="52784">MSELTSLTIAEARQKLRAKEITAIELTEAYISAIDAANGRLNAYIKVTPDLARVMAKNSDERIAAGKAGELEGIPLGIKDLFATVGVHTQACSHILDGFEPRYESTVTQNLWDDGAVMLGKLNMDEFAMGSSNETSYYGPVINPWRAAGSNQQLVPGGSSGGSAAAVAAHLCAGATATDTGGSIRQPAAFTGTVGIKPTYGRCSRWGTVAFASSLDQAGPIARDVRDAAILLKSMASVDAKDTTSVDLPVPDYEAALGQSLKGMKIGIPNEYRVDGMPDEIETLWRQGIAWLKEAGAEIVDISLPHTKYALPAYYIVAPAEASSNLARYDGVRYGLRVDGKDIVDMYEKTRAAGFGKEVKRRIMIGTYVLSAGYYDAYYIRAQKVRTLIKRDFELAFDAGVDAILTPATPSSAFGVADENLAADPVKMYLNDIFTVTVNMAGLPGIAVPAGLDHKGLPLGLQLIGKPFDEETLFKTAHVIEQAAGRFTPAKWW</sequence>
<comment type="function">
    <text evidence="1">Allows the formation of correctly charged Gln-tRNA(Gln) through the transamidation of misacylated Glu-tRNA(Gln) in organisms which lack glutaminyl-tRNA synthetase. The reaction takes place in the presence of glutamine and ATP through an activated gamma-phospho-Glu-tRNA(Gln).</text>
</comment>
<comment type="catalytic activity">
    <reaction evidence="1">
        <text>L-glutamyl-tRNA(Gln) + L-glutamine + ATP + H2O = L-glutaminyl-tRNA(Gln) + L-glutamate + ADP + phosphate + H(+)</text>
        <dbReference type="Rhea" id="RHEA:17521"/>
        <dbReference type="Rhea" id="RHEA-COMP:9681"/>
        <dbReference type="Rhea" id="RHEA-COMP:9684"/>
        <dbReference type="ChEBI" id="CHEBI:15377"/>
        <dbReference type="ChEBI" id="CHEBI:15378"/>
        <dbReference type="ChEBI" id="CHEBI:29985"/>
        <dbReference type="ChEBI" id="CHEBI:30616"/>
        <dbReference type="ChEBI" id="CHEBI:43474"/>
        <dbReference type="ChEBI" id="CHEBI:58359"/>
        <dbReference type="ChEBI" id="CHEBI:78520"/>
        <dbReference type="ChEBI" id="CHEBI:78521"/>
        <dbReference type="ChEBI" id="CHEBI:456216"/>
        <dbReference type="EC" id="6.3.5.7"/>
    </reaction>
</comment>
<comment type="subunit">
    <text evidence="1">Heterotrimer of A, B and C subunits.</text>
</comment>
<comment type="similarity">
    <text evidence="1">Belongs to the amidase family. GatA subfamily.</text>
</comment>
<dbReference type="EC" id="6.3.5.7" evidence="1"/>
<dbReference type="EMBL" id="AM236080">
    <property type="protein sequence ID" value="CAK07568.1"/>
    <property type="molecule type" value="Genomic_DNA"/>
</dbReference>
<dbReference type="RefSeq" id="WP_011651681.1">
    <property type="nucleotide sequence ID" value="NC_008380.1"/>
</dbReference>
<dbReference type="SMR" id="Q1MHJ5"/>
<dbReference type="EnsemblBacteria" id="CAK07568">
    <property type="protein sequence ID" value="CAK07568"/>
    <property type="gene ID" value="RL2076"/>
</dbReference>
<dbReference type="KEGG" id="rle:RL2076"/>
<dbReference type="eggNOG" id="COG0154">
    <property type="taxonomic scope" value="Bacteria"/>
</dbReference>
<dbReference type="HOGENOM" id="CLU_009600_0_3_5"/>
<dbReference type="Proteomes" id="UP000006575">
    <property type="component" value="Chromosome"/>
</dbReference>
<dbReference type="GO" id="GO:0030956">
    <property type="term" value="C:glutamyl-tRNA(Gln) amidotransferase complex"/>
    <property type="evidence" value="ECO:0007669"/>
    <property type="project" value="InterPro"/>
</dbReference>
<dbReference type="GO" id="GO:0005524">
    <property type="term" value="F:ATP binding"/>
    <property type="evidence" value="ECO:0007669"/>
    <property type="project" value="UniProtKB-KW"/>
</dbReference>
<dbReference type="GO" id="GO:0050567">
    <property type="term" value="F:glutaminyl-tRNA synthase (glutamine-hydrolyzing) activity"/>
    <property type="evidence" value="ECO:0007669"/>
    <property type="project" value="UniProtKB-UniRule"/>
</dbReference>
<dbReference type="GO" id="GO:0006412">
    <property type="term" value="P:translation"/>
    <property type="evidence" value="ECO:0007669"/>
    <property type="project" value="UniProtKB-UniRule"/>
</dbReference>
<dbReference type="Gene3D" id="3.90.1300.10">
    <property type="entry name" value="Amidase signature (AS) domain"/>
    <property type="match status" value="1"/>
</dbReference>
<dbReference type="HAMAP" id="MF_00120">
    <property type="entry name" value="GatA"/>
    <property type="match status" value="1"/>
</dbReference>
<dbReference type="InterPro" id="IPR000120">
    <property type="entry name" value="Amidase"/>
</dbReference>
<dbReference type="InterPro" id="IPR020556">
    <property type="entry name" value="Amidase_CS"/>
</dbReference>
<dbReference type="InterPro" id="IPR023631">
    <property type="entry name" value="Amidase_dom"/>
</dbReference>
<dbReference type="InterPro" id="IPR036928">
    <property type="entry name" value="AS_sf"/>
</dbReference>
<dbReference type="InterPro" id="IPR004412">
    <property type="entry name" value="GatA"/>
</dbReference>
<dbReference type="NCBIfam" id="TIGR00132">
    <property type="entry name" value="gatA"/>
    <property type="match status" value="1"/>
</dbReference>
<dbReference type="PANTHER" id="PTHR11895:SF151">
    <property type="entry name" value="GLUTAMYL-TRNA(GLN) AMIDOTRANSFERASE SUBUNIT A"/>
    <property type="match status" value="1"/>
</dbReference>
<dbReference type="PANTHER" id="PTHR11895">
    <property type="entry name" value="TRANSAMIDASE"/>
    <property type="match status" value="1"/>
</dbReference>
<dbReference type="Pfam" id="PF01425">
    <property type="entry name" value="Amidase"/>
    <property type="match status" value="1"/>
</dbReference>
<dbReference type="SUPFAM" id="SSF75304">
    <property type="entry name" value="Amidase signature (AS) enzymes"/>
    <property type="match status" value="1"/>
</dbReference>
<dbReference type="PROSITE" id="PS00571">
    <property type="entry name" value="AMIDASES"/>
    <property type="match status" value="1"/>
</dbReference>
<protein>
    <recommendedName>
        <fullName evidence="1">Glutamyl-tRNA(Gln) amidotransferase subunit A</fullName>
        <shortName evidence="1">Glu-ADT subunit A</shortName>
        <ecNumber evidence="1">6.3.5.7</ecNumber>
    </recommendedName>
</protein>
<evidence type="ECO:0000255" key="1">
    <source>
        <dbReference type="HAMAP-Rule" id="MF_00120"/>
    </source>
</evidence>
<gene>
    <name evidence="1" type="primary">gatA</name>
    <name type="ordered locus">RL2076</name>
</gene>
<name>GATA_RHIJ3</name>